<reference key="1">
    <citation type="journal article" date="2003" name="PLoS Biol.">
        <title>The genome sequence of Caenorhabditis briggsae: a platform for comparative genomics.</title>
        <authorList>
            <person name="Stein L.D."/>
            <person name="Bao Z."/>
            <person name="Blasiar D."/>
            <person name="Blumenthal T."/>
            <person name="Brent M.R."/>
            <person name="Chen N."/>
            <person name="Chinwalla A."/>
            <person name="Clarke L."/>
            <person name="Clee C."/>
            <person name="Coghlan A."/>
            <person name="Coulson A."/>
            <person name="D'Eustachio P."/>
            <person name="Fitch D.H.A."/>
            <person name="Fulton L.A."/>
            <person name="Fulton R.E."/>
            <person name="Griffiths-Jones S."/>
            <person name="Harris T.W."/>
            <person name="Hillier L.W."/>
            <person name="Kamath R."/>
            <person name="Kuwabara P.E."/>
            <person name="Mardis E.R."/>
            <person name="Marra M.A."/>
            <person name="Miner T.L."/>
            <person name="Minx P."/>
            <person name="Mullikin J.C."/>
            <person name="Plumb R.W."/>
            <person name="Rogers J."/>
            <person name="Schein J.E."/>
            <person name="Sohrmann M."/>
            <person name="Spieth J."/>
            <person name="Stajich J.E."/>
            <person name="Wei C."/>
            <person name="Willey D."/>
            <person name="Wilson R.K."/>
            <person name="Durbin R.M."/>
            <person name="Waterston R.H."/>
        </authorList>
    </citation>
    <scope>NUCLEOTIDE SEQUENCE [LARGE SCALE GENOMIC DNA]</scope>
    <source>
        <strain>AF16</strain>
    </source>
</reference>
<accession>Q61E63</accession>
<accession>A8XF02</accession>
<organism>
    <name type="scientific">Caenorhabditis briggsae</name>
    <dbReference type="NCBI Taxonomy" id="6238"/>
    <lineage>
        <taxon>Eukaryota</taxon>
        <taxon>Metazoa</taxon>
        <taxon>Ecdysozoa</taxon>
        <taxon>Nematoda</taxon>
        <taxon>Chromadorea</taxon>
        <taxon>Rhabditida</taxon>
        <taxon>Rhabditina</taxon>
        <taxon>Rhabditomorpha</taxon>
        <taxon>Rhabditoidea</taxon>
        <taxon>Rhabditidae</taxon>
        <taxon>Peloderinae</taxon>
        <taxon>Caenorhabditis</taxon>
    </lineage>
</organism>
<proteinExistence type="inferred from homology"/>
<sequence length="1034" mass="117848">MGDKRVVLNKDIFFQRAERLYELWETGQVGLDSVNSIAVAYGDSENPYTKSSALHSWLFGHEINDTALLFLKDHIYILGSNRKVEFFGTVTGVQYNGRVPPVSTLLRDKSDKDAGNFEKLIDYIKRAEGDLGSFVKEKFNSDFVNAWNDALKADDINKTDVSLAFMHLFAVKDDKELELVRKSAQVTTTSWTAARQRYVEIIDSERRVRHSVLSSEFSAYMKDPKIQQSLAKYNADTCYDPIVMSGGNYSFKWNHDNSEAHLHNQFGSIITSFGARLSDYCTNLTRTMLIFPSAELEAAYEAILAAEFAVIAALKPGVKLKDVYKIGVDTLTEKNPKLAETLNKKELGFATGIEFRESRLSINAKCEEVVKEGMVFIVYIGVDSIPNKNKGEKGKPAAIAISDTILVKAEGDNEVLTEKAKSRLKSNVIKFKEEQENRETERDTDQKKLLGRGQRSVVLNDQTRNKTTNEDLRKERQKELGKQLNLNAKARLSKQDGGTDEKKVKKSNVSYKNEERFPQDTDVQKMLIFVDRKYDSVIVPIFGIPVPFHISMIKNCSQSVEGDFTYLRINFATPGSQVGKDNAQFPHPLAHFMKELTFRASNIKEHHSDATPPSSNLSTAFRQIKEMQKRFRTEEAEEREKDGAVKQDKLILSQNKLNPKLKDLLIRPNIIQKRITGSLEAHTNGFRYTSLRGDRIDVLYNNIKHAFFQPCDNEMIILLHFHLKNPVMWGKKKYKDVQFYTEVGEITTDLGKYHHMQDRDDMHSEQQERELRRRLNTTFNSFCEKVSRLTNDQFEFDSPFAGLGFFGVPFRSATTLKPTASCLVNLTEWPPFIVTLSEVELVHFERVSLQLKNFDMVFIFKDYKMKTQMVAQIPMSSIDKIKEWLHTCDIWYSEGIQSLNWAKVMKTITDDPEDFFENGGWTFLDAESEGEDAGDDSDESDAYDPEEADASDGGSSSASDEDESEGEETESDDDEEGSLDSDESEGKDWSDLEEEAAKADKRREVEDGGRDRDRDRDRKRPSSSKAGPSHKRRK</sequence>
<protein>
    <recommendedName>
        <fullName>FACT complex subunit spt-16</fullName>
    </recommendedName>
    <alternativeName>
        <fullName>Facilitates chromatin transcription complex subunit spt-16</fullName>
    </alternativeName>
</protein>
<name>SPT16_CAEBR</name>
<comment type="function">
    <text evidence="1">Component of the FACT complex, a general chromatin factor that acts to reorganize nucleosomes. The FACT complex is involved in multiple processes that require DNA as a template such as mRNA elongation, DNA replication and DNA repair. During transcription elongation the FACT complex acts as a histone chaperone that both destabilizes and restores nucleosomal structure. It facilitates the passage of RNA polymerase II and transcription by promoting the dissociation of one histone H2A-H2B dimer from the nucleosome, then subsequently promotes the reestablishment of the nucleosome following the passage of RNA polymerase II (By similarity).</text>
</comment>
<comment type="subunit">
    <text evidence="1">Component of the FACT complex, a stable heterodimer of spt-16 and hmg-3 or hmg-4.</text>
</comment>
<comment type="subcellular location">
    <subcellularLocation>
        <location evidence="1">Nucleus</location>
    </subcellularLocation>
    <subcellularLocation>
        <location evidence="1">Chromosome</location>
    </subcellularLocation>
</comment>
<comment type="similarity">
    <text evidence="4">Belongs to the peptidase M24 family. SPT16 subfamily.</text>
</comment>
<comment type="caution">
    <text evidence="4">Although related to the peptidase M24 family, this protein lacks conserved active site residues suggesting that it may lack peptidase activity.</text>
</comment>
<evidence type="ECO:0000250" key="1"/>
<evidence type="ECO:0000255" key="2"/>
<evidence type="ECO:0000256" key="3">
    <source>
        <dbReference type="SAM" id="MobiDB-lite"/>
    </source>
</evidence>
<evidence type="ECO:0000305" key="4"/>
<dbReference type="EMBL" id="HE600958">
    <property type="protein sequence ID" value="CAP31224.3"/>
    <property type="molecule type" value="Genomic_DNA"/>
</dbReference>
<dbReference type="RefSeq" id="XP_002639851.1">
    <property type="nucleotide sequence ID" value="XM_002639805.1"/>
</dbReference>
<dbReference type="SMR" id="Q61E63"/>
<dbReference type="FunCoup" id="Q61E63">
    <property type="interactions" value="3307"/>
</dbReference>
<dbReference type="STRING" id="6238.Q61E63"/>
<dbReference type="EnsemblMetazoa" id="CBG12204.1">
    <property type="protein sequence ID" value="CBG12204.1"/>
    <property type="gene ID" value="WBGene00033188"/>
</dbReference>
<dbReference type="GeneID" id="8581845"/>
<dbReference type="KEGG" id="cbr:CBG_12204"/>
<dbReference type="CTD" id="8581845"/>
<dbReference type="WormBase" id="CBG12204">
    <property type="protein sequence ID" value="CBP02968"/>
    <property type="gene ID" value="WBGene00033188"/>
    <property type="gene designation" value="Cbr-spt-16"/>
</dbReference>
<dbReference type="eggNOG" id="KOG1189">
    <property type="taxonomic scope" value="Eukaryota"/>
</dbReference>
<dbReference type="HOGENOM" id="CLU_004627_1_0_1"/>
<dbReference type="InParanoid" id="Q61E63"/>
<dbReference type="OMA" id="YHINTIP"/>
<dbReference type="Proteomes" id="UP000008549">
    <property type="component" value="Unassembled WGS sequence"/>
</dbReference>
<dbReference type="GO" id="GO:0035101">
    <property type="term" value="C:FACT complex"/>
    <property type="evidence" value="ECO:0000318"/>
    <property type="project" value="GO_Central"/>
</dbReference>
<dbReference type="GO" id="GO:0031491">
    <property type="term" value="F:nucleosome binding"/>
    <property type="evidence" value="ECO:0000318"/>
    <property type="project" value="GO_Central"/>
</dbReference>
<dbReference type="GO" id="GO:0006281">
    <property type="term" value="P:DNA repair"/>
    <property type="evidence" value="ECO:0007669"/>
    <property type="project" value="UniProtKB-KW"/>
</dbReference>
<dbReference type="GO" id="GO:0006260">
    <property type="term" value="P:DNA replication"/>
    <property type="evidence" value="ECO:0007669"/>
    <property type="project" value="UniProtKB-KW"/>
</dbReference>
<dbReference type="GO" id="GO:0006368">
    <property type="term" value="P:transcription elongation by RNA polymerase II"/>
    <property type="evidence" value="ECO:0000318"/>
    <property type="project" value="GO_Central"/>
</dbReference>
<dbReference type="CDD" id="cd01091">
    <property type="entry name" value="CDC68-like"/>
    <property type="match status" value="1"/>
</dbReference>
<dbReference type="FunFam" id="2.30.29.150:FF:000003">
    <property type="entry name" value="FACT complex subunit SPT16"/>
    <property type="match status" value="1"/>
</dbReference>
<dbReference type="FunFam" id="2.30.29.30:FF:000017">
    <property type="entry name" value="FACT complex subunit SPT16"/>
    <property type="match status" value="1"/>
</dbReference>
<dbReference type="FunFam" id="2.30.29.210:FF:000001">
    <property type="entry name" value="FACT complex subunit spt16"/>
    <property type="match status" value="1"/>
</dbReference>
<dbReference type="FunFam" id="3.90.230.10:FF:000021">
    <property type="entry name" value="Transcription factor-like protein"/>
    <property type="match status" value="1"/>
</dbReference>
<dbReference type="Gene3D" id="2.30.29.150">
    <property type="match status" value="1"/>
</dbReference>
<dbReference type="Gene3D" id="3.90.230.10">
    <property type="entry name" value="Creatinase/methionine aminopeptidase superfamily"/>
    <property type="match status" value="1"/>
</dbReference>
<dbReference type="Gene3D" id="3.40.350.10">
    <property type="entry name" value="Creatinase/prolidase N-terminal domain"/>
    <property type="match status" value="1"/>
</dbReference>
<dbReference type="Gene3D" id="2.30.29.210">
    <property type="entry name" value="FACT complex subunit Spt16p/Cdc68p"/>
    <property type="match status" value="1"/>
</dbReference>
<dbReference type="Gene3D" id="2.30.29.30">
    <property type="entry name" value="Pleckstrin-homology domain (PH domain)/Phosphotyrosine-binding domain (PTB)"/>
    <property type="match status" value="1"/>
</dbReference>
<dbReference type="InterPro" id="IPR029149">
    <property type="entry name" value="Creatin/AminoP/Spt16_N"/>
</dbReference>
<dbReference type="InterPro" id="IPR036005">
    <property type="entry name" value="Creatinase/aminopeptidase-like"/>
</dbReference>
<dbReference type="InterPro" id="IPR029148">
    <property type="entry name" value="FACT-SPT16_Nlobe"/>
</dbReference>
<dbReference type="InterPro" id="IPR056595">
    <property type="entry name" value="Fact-SPT16_PH"/>
</dbReference>
<dbReference type="InterPro" id="IPR048969">
    <property type="entry name" value="FACT_SPT16_C"/>
</dbReference>
<dbReference type="InterPro" id="IPR013953">
    <property type="entry name" value="FACT_SPT16_M"/>
</dbReference>
<dbReference type="InterPro" id="IPR000994">
    <property type="entry name" value="Pept_M24"/>
</dbReference>
<dbReference type="InterPro" id="IPR011993">
    <property type="entry name" value="PH-like_dom_sf"/>
</dbReference>
<dbReference type="InterPro" id="IPR013719">
    <property type="entry name" value="RTT106/SPT16-like_middle_dom"/>
</dbReference>
<dbReference type="InterPro" id="IPR040258">
    <property type="entry name" value="Spt16"/>
</dbReference>
<dbReference type="InterPro" id="IPR033825">
    <property type="entry name" value="Spt16_M24"/>
</dbReference>
<dbReference type="PANTHER" id="PTHR13980">
    <property type="entry name" value="CDC68 RELATED"/>
    <property type="match status" value="1"/>
</dbReference>
<dbReference type="PANTHER" id="PTHR13980:SF15">
    <property type="entry name" value="FACT COMPLEX SUBUNIT SPT16"/>
    <property type="match status" value="1"/>
</dbReference>
<dbReference type="Pfam" id="PF14826">
    <property type="entry name" value="FACT-Spt16_Nlob"/>
    <property type="match status" value="1"/>
</dbReference>
<dbReference type="Pfam" id="PF00557">
    <property type="entry name" value="Peptidase_M24"/>
    <property type="match status" value="1"/>
</dbReference>
<dbReference type="Pfam" id="PF24824">
    <property type="entry name" value="PH_SPT16"/>
    <property type="match status" value="1"/>
</dbReference>
<dbReference type="Pfam" id="PF08512">
    <property type="entry name" value="Rttp106-like_middle"/>
    <property type="match status" value="1"/>
</dbReference>
<dbReference type="Pfam" id="PF08644">
    <property type="entry name" value="SPT16"/>
    <property type="match status" value="1"/>
</dbReference>
<dbReference type="Pfam" id="PF21091">
    <property type="entry name" value="SPT16_C"/>
    <property type="match status" value="1"/>
</dbReference>
<dbReference type="SMART" id="SM01285">
    <property type="entry name" value="FACT-Spt16_Nlob"/>
    <property type="match status" value="1"/>
</dbReference>
<dbReference type="SMART" id="SM01287">
    <property type="entry name" value="Rtt106"/>
    <property type="match status" value="1"/>
</dbReference>
<dbReference type="SMART" id="SM01286">
    <property type="entry name" value="SPT16"/>
    <property type="match status" value="1"/>
</dbReference>
<dbReference type="SUPFAM" id="SSF55920">
    <property type="entry name" value="Creatinase/aminopeptidase"/>
    <property type="match status" value="1"/>
</dbReference>
<keyword id="KW-0158">Chromosome</keyword>
<keyword id="KW-0175">Coiled coil</keyword>
<keyword id="KW-0227">DNA damage</keyword>
<keyword id="KW-0234">DNA repair</keyword>
<keyword id="KW-0235">DNA replication</keyword>
<keyword id="KW-0539">Nucleus</keyword>
<keyword id="KW-1185">Reference proteome</keyword>
<keyword id="KW-0804">Transcription</keyword>
<keyword id="KW-0805">Transcription regulation</keyword>
<feature type="chain" id="PRO_0000245172" description="FACT complex subunit spt-16">
    <location>
        <begin position="1"/>
        <end position="1034"/>
    </location>
</feature>
<feature type="region of interest" description="Disordered" evidence="3">
    <location>
        <begin position="433"/>
        <end position="511"/>
    </location>
</feature>
<feature type="region of interest" description="Disordered" evidence="3">
    <location>
        <begin position="926"/>
        <end position="1034"/>
    </location>
</feature>
<feature type="coiled-coil region" evidence="2">
    <location>
        <begin position="617"/>
        <end position="642"/>
    </location>
</feature>
<feature type="compositionally biased region" description="Basic and acidic residues" evidence="3">
    <location>
        <begin position="433"/>
        <end position="448"/>
    </location>
</feature>
<feature type="compositionally biased region" description="Basic and acidic residues" evidence="3">
    <location>
        <begin position="463"/>
        <end position="481"/>
    </location>
</feature>
<feature type="compositionally biased region" description="Basic and acidic residues" evidence="3">
    <location>
        <begin position="493"/>
        <end position="503"/>
    </location>
</feature>
<feature type="compositionally biased region" description="Acidic residues" evidence="3">
    <location>
        <begin position="926"/>
        <end position="950"/>
    </location>
</feature>
<feature type="compositionally biased region" description="Acidic residues" evidence="3">
    <location>
        <begin position="959"/>
        <end position="983"/>
    </location>
</feature>
<feature type="compositionally biased region" description="Basic and acidic residues" evidence="3">
    <location>
        <begin position="984"/>
        <end position="1020"/>
    </location>
</feature>
<feature type="compositionally biased region" description="Basic residues" evidence="3">
    <location>
        <begin position="1021"/>
        <end position="1034"/>
    </location>
</feature>
<gene>
    <name type="primary">spt-16</name>
    <name type="ORF">CBG12204</name>
</gene>